<accession>B5BFW5</accession>
<name>YQHA_SALPK</name>
<keyword id="KW-1003">Cell membrane</keyword>
<keyword id="KW-0472">Membrane</keyword>
<keyword id="KW-0812">Transmembrane</keyword>
<keyword id="KW-1133">Transmembrane helix</keyword>
<dbReference type="EMBL" id="FM200053">
    <property type="protein sequence ID" value="CAR61064.1"/>
    <property type="molecule type" value="Genomic_DNA"/>
</dbReference>
<dbReference type="RefSeq" id="WP_000439335.1">
    <property type="nucleotide sequence ID" value="NC_011147.1"/>
</dbReference>
<dbReference type="KEGG" id="sek:SSPA2818"/>
<dbReference type="HOGENOM" id="CLU_097887_1_1_6"/>
<dbReference type="Proteomes" id="UP000001869">
    <property type="component" value="Chromosome"/>
</dbReference>
<dbReference type="GO" id="GO:0005886">
    <property type="term" value="C:plasma membrane"/>
    <property type="evidence" value="ECO:0007669"/>
    <property type="project" value="UniProtKB-SubCell"/>
</dbReference>
<dbReference type="HAMAP" id="MF_00143">
    <property type="entry name" value="UPF0114"/>
    <property type="match status" value="1"/>
</dbReference>
<dbReference type="InterPro" id="IPR005134">
    <property type="entry name" value="UPF0114"/>
</dbReference>
<dbReference type="InterPro" id="IPR020761">
    <property type="entry name" value="UPF0114_bac"/>
</dbReference>
<dbReference type="NCBIfam" id="TIGR00645">
    <property type="entry name" value="HI0507"/>
    <property type="match status" value="1"/>
</dbReference>
<dbReference type="PANTHER" id="PTHR38596">
    <property type="entry name" value="UPF0114 PROTEIN YQHA"/>
    <property type="match status" value="1"/>
</dbReference>
<dbReference type="PANTHER" id="PTHR38596:SF1">
    <property type="entry name" value="UPF0114 PROTEIN YQHA"/>
    <property type="match status" value="1"/>
</dbReference>
<dbReference type="Pfam" id="PF03350">
    <property type="entry name" value="UPF0114"/>
    <property type="match status" value="1"/>
</dbReference>
<proteinExistence type="inferred from homology"/>
<evidence type="ECO:0000255" key="1">
    <source>
        <dbReference type="HAMAP-Rule" id="MF_00143"/>
    </source>
</evidence>
<reference key="1">
    <citation type="journal article" date="2009" name="BMC Genomics">
        <title>Pseudogene accumulation in the evolutionary histories of Salmonella enterica serovars Paratyphi A and Typhi.</title>
        <authorList>
            <person name="Holt K.E."/>
            <person name="Thomson N.R."/>
            <person name="Wain J."/>
            <person name="Langridge G.C."/>
            <person name="Hasan R."/>
            <person name="Bhutta Z.A."/>
            <person name="Quail M.A."/>
            <person name="Norbertczak H."/>
            <person name="Walker D."/>
            <person name="Simmonds M."/>
            <person name="White B."/>
            <person name="Bason N."/>
            <person name="Mungall K."/>
            <person name="Dougan G."/>
            <person name="Parkhill J."/>
        </authorList>
    </citation>
    <scope>NUCLEOTIDE SEQUENCE [LARGE SCALE GENOMIC DNA]</scope>
    <source>
        <strain>AKU_12601</strain>
    </source>
</reference>
<protein>
    <recommendedName>
        <fullName evidence="1">UPF0114 protein YqhA</fullName>
    </recommendedName>
</protein>
<organism>
    <name type="scientific">Salmonella paratyphi A (strain AKU_12601)</name>
    <dbReference type="NCBI Taxonomy" id="554290"/>
    <lineage>
        <taxon>Bacteria</taxon>
        <taxon>Pseudomonadati</taxon>
        <taxon>Pseudomonadota</taxon>
        <taxon>Gammaproteobacteria</taxon>
        <taxon>Enterobacterales</taxon>
        <taxon>Enterobacteriaceae</taxon>
        <taxon>Salmonella</taxon>
    </lineage>
</organism>
<comment type="subcellular location">
    <subcellularLocation>
        <location evidence="1">Cell membrane</location>
        <topology evidence="1">Multi-pass membrane protein</topology>
    </subcellularLocation>
</comment>
<comment type="similarity">
    <text evidence="1">Belongs to the UPF0114 family.</text>
</comment>
<gene>
    <name evidence="1" type="primary">yqhA</name>
    <name type="ordered locus">SSPA2818</name>
</gene>
<feature type="chain" id="PRO_1000096279" description="UPF0114 protein YqhA">
    <location>
        <begin position="1"/>
        <end position="164"/>
    </location>
</feature>
<feature type="transmembrane region" description="Helical" evidence="1">
    <location>
        <begin position="15"/>
        <end position="35"/>
    </location>
</feature>
<feature type="transmembrane region" description="Helical" evidence="1">
    <location>
        <begin position="53"/>
        <end position="73"/>
    </location>
</feature>
<feature type="transmembrane region" description="Helical" evidence="1">
    <location>
        <begin position="136"/>
        <end position="156"/>
    </location>
</feature>
<sequence length="164" mass="18504">MERFLENVMYASRWLLAPVYFGLSLALIALALKFFQEILHVLPNVFALAEADLILVLLSLVDMTLVGGLLVMVMFSGYENFVSQLDISAGKEKLNWLGKMDATSLKNKVAASIVAISSIHLLRVFMDAKNVPDNKLMWYVIIHLTFVLSAFVMGYLDRLTRHNH</sequence>